<reference key="1">
    <citation type="journal article" date="2003" name="Mol. Microbiol.">
        <title>Genome-based analysis of virulence genes in a non-biofilm-forming Staphylococcus epidermidis strain (ATCC 12228).</title>
        <authorList>
            <person name="Zhang Y.-Q."/>
            <person name="Ren S.-X."/>
            <person name="Li H.-L."/>
            <person name="Wang Y.-X."/>
            <person name="Fu G."/>
            <person name="Yang J."/>
            <person name="Qin Z.-Q."/>
            <person name="Miao Y.-G."/>
            <person name="Wang W.-Y."/>
            <person name="Chen R.-S."/>
            <person name="Shen Y."/>
            <person name="Chen Z."/>
            <person name="Yuan Z.-H."/>
            <person name="Zhao G.-P."/>
            <person name="Qu D."/>
            <person name="Danchin A."/>
            <person name="Wen Y.-M."/>
        </authorList>
    </citation>
    <scope>NUCLEOTIDE SEQUENCE [LARGE SCALE GENOMIC DNA]</scope>
    <source>
        <strain>ATCC 12228 / FDA PCI 1200</strain>
    </source>
</reference>
<reference key="2">
    <citation type="submission" date="2002-10" db="EMBL/GenBank/DDBJ databases">
        <title>Establishment of a multilocus sequence typing system for Staphylococcus epidermidis.</title>
        <authorList>
            <person name="Anderson A.S."/>
            <person name="Wang X.-M."/>
            <person name="McClements W."/>
            <person name="Noble L."/>
            <person name="Jansen K."/>
        </authorList>
    </citation>
    <scope>NUCLEOTIDE SEQUENCE [GENOMIC DNA] OF 25-154</scope>
</reference>
<name>KGUA_STAES</name>
<feature type="chain" id="PRO_0000170610" description="Guanylate kinase">
    <location>
        <begin position="1"/>
        <end position="207"/>
    </location>
</feature>
<feature type="domain" description="Guanylate kinase-like" evidence="1">
    <location>
        <begin position="6"/>
        <end position="185"/>
    </location>
</feature>
<feature type="binding site" evidence="1">
    <location>
        <begin position="13"/>
        <end position="20"/>
    </location>
    <ligand>
        <name>ATP</name>
        <dbReference type="ChEBI" id="CHEBI:30616"/>
    </ligand>
</feature>
<comment type="function">
    <text evidence="1">Essential for recycling GMP and indirectly, cGMP.</text>
</comment>
<comment type="catalytic activity">
    <reaction evidence="1">
        <text>GMP + ATP = GDP + ADP</text>
        <dbReference type="Rhea" id="RHEA:20780"/>
        <dbReference type="ChEBI" id="CHEBI:30616"/>
        <dbReference type="ChEBI" id="CHEBI:58115"/>
        <dbReference type="ChEBI" id="CHEBI:58189"/>
        <dbReference type="ChEBI" id="CHEBI:456216"/>
        <dbReference type="EC" id="2.7.4.8"/>
    </reaction>
</comment>
<comment type="subcellular location">
    <subcellularLocation>
        <location evidence="1">Cytoplasm</location>
    </subcellularLocation>
</comment>
<comment type="similarity">
    <text evidence="1">Belongs to the guanylate kinase family.</text>
</comment>
<dbReference type="EC" id="2.7.4.8" evidence="1"/>
<dbReference type="EMBL" id="AE015929">
    <property type="protein sequence ID" value="AAO04482.1"/>
    <property type="molecule type" value="Genomic_DNA"/>
</dbReference>
<dbReference type="EMBL" id="AY163288">
    <property type="protein sequence ID" value="AAO60567.1"/>
    <property type="molecule type" value="Genomic_DNA"/>
</dbReference>
<dbReference type="RefSeq" id="NP_764440.1">
    <property type="nucleotide sequence ID" value="NC_004461.1"/>
</dbReference>
<dbReference type="RefSeq" id="WP_001830096.1">
    <property type="nucleotide sequence ID" value="NZ_WBME01000001.1"/>
</dbReference>
<dbReference type="SMR" id="P0C0M9"/>
<dbReference type="GeneID" id="50018977"/>
<dbReference type="KEGG" id="sep:SE_0885"/>
<dbReference type="PATRIC" id="fig|176280.10.peg.858"/>
<dbReference type="eggNOG" id="COG0194">
    <property type="taxonomic scope" value="Bacteria"/>
</dbReference>
<dbReference type="HOGENOM" id="CLU_001715_1_2_9"/>
<dbReference type="OrthoDB" id="9808150at2"/>
<dbReference type="Proteomes" id="UP000001411">
    <property type="component" value="Chromosome"/>
</dbReference>
<dbReference type="GO" id="GO:0005829">
    <property type="term" value="C:cytosol"/>
    <property type="evidence" value="ECO:0007669"/>
    <property type="project" value="TreeGrafter"/>
</dbReference>
<dbReference type="GO" id="GO:0005524">
    <property type="term" value="F:ATP binding"/>
    <property type="evidence" value="ECO:0007669"/>
    <property type="project" value="UniProtKB-UniRule"/>
</dbReference>
<dbReference type="GO" id="GO:0004385">
    <property type="term" value="F:guanylate kinase activity"/>
    <property type="evidence" value="ECO:0007669"/>
    <property type="project" value="UniProtKB-UniRule"/>
</dbReference>
<dbReference type="CDD" id="cd00071">
    <property type="entry name" value="GMPK"/>
    <property type="match status" value="1"/>
</dbReference>
<dbReference type="FunFam" id="3.40.50.300:FF:000855">
    <property type="entry name" value="Guanylate kinase"/>
    <property type="match status" value="1"/>
</dbReference>
<dbReference type="FunFam" id="3.30.63.10:FF:000002">
    <property type="entry name" value="Guanylate kinase 1"/>
    <property type="match status" value="1"/>
</dbReference>
<dbReference type="Gene3D" id="3.30.63.10">
    <property type="entry name" value="Guanylate Kinase phosphate binding domain"/>
    <property type="match status" value="1"/>
</dbReference>
<dbReference type="Gene3D" id="3.40.50.300">
    <property type="entry name" value="P-loop containing nucleotide triphosphate hydrolases"/>
    <property type="match status" value="1"/>
</dbReference>
<dbReference type="HAMAP" id="MF_00328">
    <property type="entry name" value="Guanylate_kinase"/>
    <property type="match status" value="1"/>
</dbReference>
<dbReference type="InterPro" id="IPR008145">
    <property type="entry name" value="GK/Ca_channel_bsu"/>
</dbReference>
<dbReference type="InterPro" id="IPR008144">
    <property type="entry name" value="Guanylate_kin-like_dom"/>
</dbReference>
<dbReference type="InterPro" id="IPR017665">
    <property type="entry name" value="Guanylate_kinase"/>
</dbReference>
<dbReference type="InterPro" id="IPR020590">
    <property type="entry name" value="Guanylate_kinase_CS"/>
</dbReference>
<dbReference type="InterPro" id="IPR027417">
    <property type="entry name" value="P-loop_NTPase"/>
</dbReference>
<dbReference type="NCBIfam" id="TIGR03263">
    <property type="entry name" value="guanyl_kin"/>
    <property type="match status" value="1"/>
</dbReference>
<dbReference type="PANTHER" id="PTHR23117:SF13">
    <property type="entry name" value="GUANYLATE KINASE"/>
    <property type="match status" value="1"/>
</dbReference>
<dbReference type="PANTHER" id="PTHR23117">
    <property type="entry name" value="GUANYLATE KINASE-RELATED"/>
    <property type="match status" value="1"/>
</dbReference>
<dbReference type="Pfam" id="PF00625">
    <property type="entry name" value="Guanylate_kin"/>
    <property type="match status" value="1"/>
</dbReference>
<dbReference type="SMART" id="SM00072">
    <property type="entry name" value="GuKc"/>
    <property type="match status" value="1"/>
</dbReference>
<dbReference type="SUPFAM" id="SSF52540">
    <property type="entry name" value="P-loop containing nucleoside triphosphate hydrolases"/>
    <property type="match status" value="1"/>
</dbReference>
<dbReference type="PROSITE" id="PS00856">
    <property type="entry name" value="GUANYLATE_KINASE_1"/>
    <property type="match status" value="1"/>
</dbReference>
<dbReference type="PROSITE" id="PS50052">
    <property type="entry name" value="GUANYLATE_KINASE_2"/>
    <property type="match status" value="1"/>
</dbReference>
<keyword id="KW-0067">ATP-binding</keyword>
<keyword id="KW-0963">Cytoplasm</keyword>
<keyword id="KW-0418">Kinase</keyword>
<keyword id="KW-0547">Nucleotide-binding</keyword>
<keyword id="KW-0808">Transferase</keyword>
<accession>P0C0M9</accession>
<accession>Q8CSW4</accession>
<proteinExistence type="inferred from homology"/>
<evidence type="ECO:0000255" key="1">
    <source>
        <dbReference type="HAMAP-Rule" id="MF_00328"/>
    </source>
</evidence>
<protein>
    <recommendedName>
        <fullName evidence="1">Guanylate kinase</fullName>
        <ecNumber evidence="1">2.7.4.8</ecNumber>
    </recommendedName>
    <alternativeName>
        <fullName evidence="1">GMP kinase</fullName>
    </alternativeName>
</protein>
<sequence length="207" mass="24065">MDKEKGLLIVLSGPSGVGKGTVRKKIFEDPTTSYKYSISMTTRHMREGEIDGVDYFFKTKEEFEALIKDDQFIEYAQYVGNYYGTPVQYVKDTMEEGHDVFLEIEVEGAKQVRKKFPDALFIFLAPPSLDDLKERLVGRGTESDEKIQSRVNEARKEVEMMNLYDYVVVNDEVELAKNRIQSIVEAEHLKRERIEAKYRKMLLEVKK</sequence>
<organism>
    <name type="scientific">Staphylococcus epidermidis (strain ATCC 12228 / FDA PCI 1200)</name>
    <dbReference type="NCBI Taxonomy" id="176280"/>
    <lineage>
        <taxon>Bacteria</taxon>
        <taxon>Bacillati</taxon>
        <taxon>Bacillota</taxon>
        <taxon>Bacilli</taxon>
        <taxon>Bacillales</taxon>
        <taxon>Staphylococcaceae</taxon>
        <taxon>Staphylococcus</taxon>
    </lineage>
</organism>
<gene>
    <name evidence="1" type="primary">gmk</name>
    <name type="ordered locus">SE_0885</name>
</gene>